<sequence>MISFQIILQQRLRSLRFGKRCKSKRTLKSNSTAVGSSDEDDEIYVPKKPIPSPIDQSKVEEPPVFTKALITHLERLSLVRFSDEQAVLNLKQAVRFANQLKLIDTTGIKPLETLLEDIPCPLREDVPGDPMTKAEVLMNATKVVEDYFVTPPGNIPLEESDKLDLMKIEDDAQKEMSKKTLLKDSVKKTE</sequence>
<evidence type="ECO:0000255" key="1">
    <source>
        <dbReference type="HAMAP-Rule" id="MF_03149"/>
    </source>
</evidence>
<evidence type="ECO:0000256" key="2">
    <source>
        <dbReference type="SAM" id="MobiDB-lite"/>
    </source>
</evidence>
<name>GATC_LOALO</name>
<reference key="1">
    <citation type="submission" date="2010-09" db="EMBL/GenBank/DDBJ databases">
        <title>The genome sequence of Loa loa.</title>
        <authorList>
            <consortium name="The Broad Institute Genome Sequencing Platform"/>
            <person name="Nutman T.B."/>
            <person name="Fink D.L."/>
            <person name="Russ C."/>
            <person name="Young S."/>
            <person name="Zeng Q."/>
            <person name="Koehrsen M."/>
            <person name="Alvarado L."/>
            <person name="Berlin A."/>
            <person name="Borenstein D."/>
            <person name="Chapman S.B."/>
            <person name="Chen Z."/>
            <person name="Engels R."/>
            <person name="Freedman E."/>
            <person name="Gellesch M."/>
            <person name="Goldberg J."/>
            <person name="Griggs A."/>
            <person name="Gujja S."/>
            <person name="Heilman E.R."/>
            <person name="Heiman D."/>
            <person name="Hepburn T."/>
            <person name="Howarth C."/>
            <person name="Jen D."/>
            <person name="Larson L."/>
            <person name="Lewis B."/>
            <person name="Mehta T."/>
            <person name="Park D."/>
            <person name="Pearson M."/>
            <person name="Richards J."/>
            <person name="Roberts A."/>
            <person name="Saif S."/>
            <person name="Shea T."/>
            <person name="Shenoy N."/>
            <person name="Sisk P."/>
            <person name="Stolte C."/>
            <person name="Sykes S."/>
            <person name="Walk T."/>
            <person name="White J."/>
            <person name="Yandava C."/>
            <person name="Haas B."/>
            <person name="Henn M.R."/>
            <person name="Nusbaum C."/>
            <person name="Birren B."/>
        </authorList>
    </citation>
    <scope>NUCLEOTIDE SEQUENCE [LARGE SCALE GENOMIC DNA]</scope>
</reference>
<protein>
    <recommendedName>
        <fullName evidence="1">Glutamyl-tRNA(Gln) amidotransferase subunit C, mitochondrial</fullName>
        <shortName evidence="1">Glu-AdT subunit C</shortName>
        <ecNumber evidence="1">6.3.5.-</ecNumber>
    </recommendedName>
</protein>
<proteinExistence type="inferred from homology"/>
<keyword id="KW-0067">ATP-binding</keyword>
<keyword id="KW-0436">Ligase</keyword>
<keyword id="KW-0496">Mitochondrion</keyword>
<keyword id="KW-0547">Nucleotide-binding</keyword>
<keyword id="KW-0648">Protein biosynthesis</keyword>
<keyword id="KW-1185">Reference proteome</keyword>
<keyword id="KW-0809">Transit peptide</keyword>
<comment type="function">
    <text evidence="1">Allows the formation of correctly charged Gln-tRNA(Gln) through the transamidation of misacylated Glu-tRNA(Gln) in the mitochondria. The reaction takes place in the presence of glutamine and ATP through an activated gamma-phospho-Glu-tRNA(Gln).</text>
</comment>
<comment type="catalytic activity">
    <reaction evidence="1">
        <text>L-glutamyl-tRNA(Gln) + L-glutamine + ATP + H2O = L-glutaminyl-tRNA(Gln) + L-glutamate + ADP + phosphate + H(+)</text>
        <dbReference type="Rhea" id="RHEA:17521"/>
        <dbReference type="Rhea" id="RHEA-COMP:9681"/>
        <dbReference type="Rhea" id="RHEA-COMP:9684"/>
        <dbReference type="ChEBI" id="CHEBI:15377"/>
        <dbReference type="ChEBI" id="CHEBI:15378"/>
        <dbReference type="ChEBI" id="CHEBI:29985"/>
        <dbReference type="ChEBI" id="CHEBI:30616"/>
        <dbReference type="ChEBI" id="CHEBI:43474"/>
        <dbReference type="ChEBI" id="CHEBI:58359"/>
        <dbReference type="ChEBI" id="CHEBI:78520"/>
        <dbReference type="ChEBI" id="CHEBI:78521"/>
        <dbReference type="ChEBI" id="CHEBI:456216"/>
    </reaction>
</comment>
<comment type="subunit">
    <text evidence="1">Subunit of the heterotrimeric GatCAB amidotransferase (AdT) complex, composed of A, B and C subunits.</text>
</comment>
<comment type="subcellular location">
    <subcellularLocation>
        <location evidence="1">Mitochondrion</location>
    </subcellularLocation>
</comment>
<comment type="similarity">
    <text evidence="1">Belongs to the GatC family.</text>
</comment>
<gene>
    <name type="ORF">LOAG_04423</name>
</gene>
<organism>
    <name type="scientific">Loa loa</name>
    <name type="common">Eye worm</name>
    <name type="synonym">Filaria loa</name>
    <dbReference type="NCBI Taxonomy" id="7209"/>
    <lineage>
        <taxon>Eukaryota</taxon>
        <taxon>Metazoa</taxon>
        <taxon>Ecdysozoa</taxon>
        <taxon>Nematoda</taxon>
        <taxon>Chromadorea</taxon>
        <taxon>Rhabditida</taxon>
        <taxon>Spirurina</taxon>
        <taxon>Spiruromorpha</taxon>
        <taxon>Filarioidea</taxon>
        <taxon>Onchocercidae</taxon>
        <taxon>Loa</taxon>
    </lineage>
</organism>
<accession>E1FU46</accession>
<dbReference type="EC" id="6.3.5.-" evidence="1"/>
<dbReference type="EMBL" id="JH712067">
    <property type="protein sequence ID" value="EFO24057.1"/>
    <property type="molecule type" value="Genomic_DNA"/>
</dbReference>
<dbReference type="RefSeq" id="XP_003140008.1">
    <property type="nucleotide sequence ID" value="XM_003139960.2"/>
</dbReference>
<dbReference type="FunCoup" id="E1FU46">
    <property type="interactions" value="1744"/>
</dbReference>
<dbReference type="STRING" id="7209.E1FU46"/>
<dbReference type="EnsemblMetazoa" id="EFO24057.1">
    <property type="protein sequence ID" value="EFO24057.1"/>
    <property type="gene ID" value="LOAG_04423"/>
</dbReference>
<dbReference type="GeneID" id="9941831"/>
<dbReference type="KEGG" id="loa:LOAG_04423"/>
<dbReference type="WBParaSite" id="EN70_4582">
    <property type="protein sequence ID" value="EN70_4582"/>
    <property type="gene ID" value="EN70_4582"/>
</dbReference>
<dbReference type="CTD" id="9941831"/>
<dbReference type="eggNOG" id="KOG4247">
    <property type="taxonomic scope" value="Eukaryota"/>
</dbReference>
<dbReference type="HOGENOM" id="CLU_1429500_0_0_1"/>
<dbReference type="InParanoid" id="E1FU46"/>
<dbReference type="OMA" id="VTEGECA"/>
<dbReference type="OrthoDB" id="5394539at2759"/>
<dbReference type="Proteomes" id="UP000095285">
    <property type="component" value="Unassembled WGS sequence"/>
</dbReference>
<dbReference type="GO" id="GO:0030956">
    <property type="term" value="C:glutamyl-tRNA(Gln) amidotransferase complex"/>
    <property type="evidence" value="ECO:0007669"/>
    <property type="project" value="UniProtKB-UniRule"/>
</dbReference>
<dbReference type="GO" id="GO:0005739">
    <property type="term" value="C:mitochondrion"/>
    <property type="evidence" value="ECO:0007669"/>
    <property type="project" value="UniProtKB-SubCell"/>
</dbReference>
<dbReference type="GO" id="GO:0005524">
    <property type="term" value="F:ATP binding"/>
    <property type="evidence" value="ECO:0007669"/>
    <property type="project" value="UniProtKB-KW"/>
</dbReference>
<dbReference type="GO" id="GO:0050567">
    <property type="term" value="F:glutaminyl-tRNA synthase (glutamine-hydrolyzing) activity"/>
    <property type="evidence" value="ECO:0007669"/>
    <property type="project" value="UniProtKB-UniRule"/>
</dbReference>
<dbReference type="GO" id="GO:0070681">
    <property type="term" value="P:glutaminyl-tRNAGln biosynthesis via transamidation"/>
    <property type="evidence" value="ECO:0007669"/>
    <property type="project" value="UniProtKB-UniRule"/>
</dbReference>
<dbReference type="GO" id="GO:0032543">
    <property type="term" value="P:mitochondrial translation"/>
    <property type="evidence" value="ECO:0007669"/>
    <property type="project" value="UniProtKB-UniRule"/>
</dbReference>
<dbReference type="GO" id="GO:0006450">
    <property type="term" value="P:regulation of translational fidelity"/>
    <property type="evidence" value="ECO:0007669"/>
    <property type="project" value="InterPro"/>
</dbReference>
<dbReference type="HAMAP" id="MF_00122">
    <property type="entry name" value="GatC"/>
    <property type="match status" value="1"/>
</dbReference>
<dbReference type="InterPro" id="IPR036113">
    <property type="entry name" value="Asp/Glu-ADT_sf_sub_c"/>
</dbReference>
<dbReference type="InterPro" id="IPR003837">
    <property type="entry name" value="GatC"/>
</dbReference>
<dbReference type="NCBIfam" id="TIGR00135">
    <property type="entry name" value="gatC"/>
    <property type="match status" value="1"/>
</dbReference>
<dbReference type="PANTHER" id="PTHR15004">
    <property type="entry name" value="GLUTAMYL-TRNA(GLN) AMIDOTRANSFERASE SUBUNIT C, MITOCHONDRIAL"/>
    <property type="match status" value="1"/>
</dbReference>
<dbReference type="PANTHER" id="PTHR15004:SF0">
    <property type="entry name" value="GLUTAMYL-TRNA(GLN) AMIDOTRANSFERASE SUBUNIT C, MITOCHONDRIAL"/>
    <property type="match status" value="1"/>
</dbReference>
<dbReference type="Pfam" id="PF02686">
    <property type="entry name" value="GatC"/>
    <property type="match status" value="1"/>
</dbReference>
<dbReference type="SUPFAM" id="SSF141000">
    <property type="entry name" value="Glu-tRNAGln amidotransferase C subunit"/>
    <property type="match status" value="1"/>
</dbReference>
<feature type="transit peptide" description="Mitochondrion" evidence="1">
    <location>
        <begin position="1"/>
        <end position="96"/>
    </location>
</feature>
<feature type="chain" id="PRO_0000413316" description="Glutamyl-tRNA(Gln) amidotransferase subunit C, mitochondrial">
    <location>
        <begin position="97"/>
        <end position="190"/>
    </location>
</feature>
<feature type="region of interest" description="Disordered" evidence="2">
    <location>
        <begin position="28"/>
        <end position="57"/>
    </location>
</feature>